<protein>
    <recommendedName>
        <fullName evidence="1">Carboxy-S-adenosyl-L-methionine synthase</fullName>
        <shortName evidence="1">Cx-SAM synthase</shortName>
        <ecNumber evidence="1">2.1.3.-</ecNumber>
    </recommendedName>
</protein>
<name>CMOA_PHOPR</name>
<proteinExistence type="inferred from homology"/>
<sequence>MRMAGQDNIFAAPIEKLGDFTFDQKVAEVFPDMIQRSVPGYSNIISAIGMLAERFAKPHSKIYDLGCSLGAATLSMRRSIQQEGCEIIAVDNSAAMVERCRLHIDAYRSDTPVQVVEADIRNIDIADASVVVLNFTLQFLVPEDRQMLLEKIYAGLRPGGILILSEKYIFDDEQAHELLINLHHDFKRANGYSELEISQKRSAIENVMRPDSIDTHKKRLTEIGFSSTEVWFQCFNFGSMFAIK</sequence>
<gene>
    <name evidence="1" type="primary">cmoA</name>
    <name type="ordered locus">PBPRA1110</name>
</gene>
<comment type="function">
    <text evidence="1">Catalyzes the conversion of S-adenosyl-L-methionine (SAM) to carboxy-S-adenosyl-L-methionine (Cx-SAM).</text>
</comment>
<comment type="catalytic activity">
    <reaction evidence="1">
        <text>prephenate + S-adenosyl-L-methionine = carboxy-S-adenosyl-L-methionine + 3-phenylpyruvate + H2O</text>
        <dbReference type="Rhea" id="RHEA:51692"/>
        <dbReference type="ChEBI" id="CHEBI:15377"/>
        <dbReference type="ChEBI" id="CHEBI:18005"/>
        <dbReference type="ChEBI" id="CHEBI:29934"/>
        <dbReference type="ChEBI" id="CHEBI:59789"/>
        <dbReference type="ChEBI" id="CHEBI:134278"/>
    </reaction>
</comment>
<comment type="subunit">
    <text evidence="1">Homodimer.</text>
</comment>
<comment type="similarity">
    <text evidence="1">Belongs to the class I-like SAM-binding methyltransferase superfamily. Cx-SAM synthase family.</text>
</comment>
<dbReference type="EC" id="2.1.3.-" evidence="1"/>
<dbReference type="EMBL" id="CR378666">
    <property type="protein sequence ID" value="CAG19521.1"/>
    <property type="molecule type" value="Genomic_DNA"/>
</dbReference>
<dbReference type="SMR" id="Q6LT55"/>
<dbReference type="STRING" id="298386.PBPRA1110"/>
<dbReference type="KEGG" id="ppr:PBPRA1110"/>
<dbReference type="eggNOG" id="COG2226">
    <property type="taxonomic scope" value="Bacteria"/>
</dbReference>
<dbReference type="HOGENOM" id="CLU_078475_0_0_6"/>
<dbReference type="Proteomes" id="UP000000593">
    <property type="component" value="Chromosome 1"/>
</dbReference>
<dbReference type="GO" id="GO:0016743">
    <property type="term" value="F:carboxyl- or carbamoyltransferase activity"/>
    <property type="evidence" value="ECO:0007669"/>
    <property type="project" value="UniProtKB-UniRule"/>
</dbReference>
<dbReference type="GO" id="GO:1904047">
    <property type="term" value="F:S-adenosyl-L-methionine binding"/>
    <property type="evidence" value="ECO:0007669"/>
    <property type="project" value="UniProtKB-UniRule"/>
</dbReference>
<dbReference type="GO" id="GO:0002098">
    <property type="term" value="P:tRNA wobble uridine modification"/>
    <property type="evidence" value="ECO:0007669"/>
    <property type="project" value="InterPro"/>
</dbReference>
<dbReference type="CDD" id="cd02440">
    <property type="entry name" value="AdoMet_MTases"/>
    <property type="match status" value="1"/>
</dbReference>
<dbReference type="Gene3D" id="3.40.50.150">
    <property type="entry name" value="Vaccinia Virus protein VP39"/>
    <property type="match status" value="1"/>
</dbReference>
<dbReference type="HAMAP" id="MF_01589">
    <property type="entry name" value="Cx_SAM_synthase"/>
    <property type="match status" value="1"/>
</dbReference>
<dbReference type="InterPro" id="IPR005271">
    <property type="entry name" value="CmoA"/>
</dbReference>
<dbReference type="InterPro" id="IPR041698">
    <property type="entry name" value="Methyltransf_25"/>
</dbReference>
<dbReference type="InterPro" id="IPR029063">
    <property type="entry name" value="SAM-dependent_MTases_sf"/>
</dbReference>
<dbReference type="NCBIfam" id="TIGR00740">
    <property type="entry name" value="carboxy-S-adenosyl-L-methionine synthase CmoA"/>
    <property type="match status" value="1"/>
</dbReference>
<dbReference type="NCBIfam" id="NF011995">
    <property type="entry name" value="PRK15451.1"/>
    <property type="match status" value="1"/>
</dbReference>
<dbReference type="PANTHER" id="PTHR43861:SF2">
    <property type="entry name" value="CARBOXY-S-ADENOSYL-L-METHIONINE SYNTHASE"/>
    <property type="match status" value="1"/>
</dbReference>
<dbReference type="PANTHER" id="PTHR43861">
    <property type="entry name" value="TRANS-ACONITATE 2-METHYLTRANSFERASE-RELATED"/>
    <property type="match status" value="1"/>
</dbReference>
<dbReference type="Pfam" id="PF13649">
    <property type="entry name" value="Methyltransf_25"/>
    <property type="match status" value="1"/>
</dbReference>
<dbReference type="PIRSF" id="PIRSF006325">
    <property type="entry name" value="MeTrfase_bac"/>
    <property type="match status" value="1"/>
</dbReference>
<dbReference type="SUPFAM" id="SSF53335">
    <property type="entry name" value="S-adenosyl-L-methionine-dependent methyltransferases"/>
    <property type="match status" value="1"/>
</dbReference>
<reference key="1">
    <citation type="journal article" date="2005" name="Science">
        <title>Life at depth: Photobacterium profundum genome sequence and expression analysis.</title>
        <authorList>
            <person name="Vezzi A."/>
            <person name="Campanaro S."/>
            <person name="D'Angelo M."/>
            <person name="Simonato F."/>
            <person name="Vitulo N."/>
            <person name="Lauro F.M."/>
            <person name="Cestaro A."/>
            <person name="Malacrida G."/>
            <person name="Simionati B."/>
            <person name="Cannata N."/>
            <person name="Romualdi C."/>
            <person name="Bartlett D.H."/>
            <person name="Valle G."/>
        </authorList>
    </citation>
    <scope>NUCLEOTIDE SEQUENCE [LARGE SCALE GENOMIC DNA]</scope>
    <source>
        <strain>ATCC BAA-1253 / SS9</strain>
    </source>
</reference>
<accession>Q6LT55</accession>
<organism>
    <name type="scientific">Photobacterium profundum (strain SS9)</name>
    <dbReference type="NCBI Taxonomy" id="298386"/>
    <lineage>
        <taxon>Bacteria</taxon>
        <taxon>Pseudomonadati</taxon>
        <taxon>Pseudomonadota</taxon>
        <taxon>Gammaproteobacteria</taxon>
        <taxon>Vibrionales</taxon>
        <taxon>Vibrionaceae</taxon>
        <taxon>Photobacterium</taxon>
    </lineage>
</organism>
<feature type="chain" id="PRO_0000314352" description="Carboxy-S-adenosyl-L-methionine synthase">
    <location>
        <begin position="1"/>
        <end position="244"/>
    </location>
</feature>
<feature type="binding site" evidence="1">
    <location>
        <position position="41"/>
    </location>
    <ligand>
        <name>S-adenosyl-L-methionine</name>
        <dbReference type="ChEBI" id="CHEBI:59789"/>
    </ligand>
</feature>
<feature type="binding site" evidence="1">
    <location>
        <begin position="66"/>
        <end position="68"/>
    </location>
    <ligand>
        <name>S-adenosyl-L-methionine</name>
        <dbReference type="ChEBI" id="CHEBI:59789"/>
    </ligand>
</feature>
<feature type="binding site" evidence="1">
    <location>
        <begin position="91"/>
        <end position="92"/>
    </location>
    <ligand>
        <name>S-adenosyl-L-methionine</name>
        <dbReference type="ChEBI" id="CHEBI:59789"/>
    </ligand>
</feature>
<feature type="binding site" evidence="1">
    <location>
        <begin position="119"/>
        <end position="120"/>
    </location>
    <ligand>
        <name>S-adenosyl-L-methionine</name>
        <dbReference type="ChEBI" id="CHEBI:59789"/>
    </ligand>
</feature>
<feature type="binding site" evidence="1">
    <location>
        <position position="134"/>
    </location>
    <ligand>
        <name>S-adenosyl-L-methionine</name>
        <dbReference type="ChEBI" id="CHEBI:59789"/>
    </ligand>
</feature>
<feature type="binding site" evidence="1">
    <location>
        <position position="201"/>
    </location>
    <ligand>
        <name>S-adenosyl-L-methionine</name>
        <dbReference type="ChEBI" id="CHEBI:59789"/>
    </ligand>
</feature>
<evidence type="ECO:0000255" key="1">
    <source>
        <dbReference type="HAMAP-Rule" id="MF_01589"/>
    </source>
</evidence>
<keyword id="KW-1185">Reference proteome</keyword>
<keyword id="KW-0949">S-adenosyl-L-methionine</keyword>
<keyword id="KW-0808">Transferase</keyword>